<sequence>MAKGIREKIKLVSSAGTGHFYTTTKNKRTKPEKLELKKFDPVVRQHVIYKEAKIK</sequence>
<dbReference type="EMBL" id="CP001113">
    <property type="protein sequence ID" value="ACF61759.1"/>
    <property type="molecule type" value="Genomic_DNA"/>
</dbReference>
<dbReference type="RefSeq" id="WP_001051798.1">
    <property type="nucleotide sequence ID" value="NZ_CCMR01000004.1"/>
</dbReference>
<dbReference type="SMR" id="B4SXD8"/>
<dbReference type="GeneID" id="97607673"/>
<dbReference type="KEGG" id="see:SNSL254_A4007"/>
<dbReference type="HOGENOM" id="CLU_190949_1_1_6"/>
<dbReference type="Proteomes" id="UP000008824">
    <property type="component" value="Chromosome"/>
</dbReference>
<dbReference type="GO" id="GO:0022625">
    <property type="term" value="C:cytosolic large ribosomal subunit"/>
    <property type="evidence" value="ECO:0007669"/>
    <property type="project" value="TreeGrafter"/>
</dbReference>
<dbReference type="GO" id="GO:0003735">
    <property type="term" value="F:structural constituent of ribosome"/>
    <property type="evidence" value="ECO:0007669"/>
    <property type="project" value="InterPro"/>
</dbReference>
<dbReference type="GO" id="GO:0006412">
    <property type="term" value="P:translation"/>
    <property type="evidence" value="ECO:0007669"/>
    <property type="project" value="UniProtKB-UniRule"/>
</dbReference>
<dbReference type="FunFam" id="2.20.28.120:FF:000001">
    <property type="entry name" value="50S ribosomal protein L33"/>
    <property type="match status" value="1"/>
</dbReference>
<dbReference type="Gene3D" id="2.20.28.120">
    <property type="entry name" value="Ribosomal protein L33"/>
    <property type="match status" value="1"/>
</dbReference>
<dbReference type="HAMAP" id="MF_00294">
    <property type="entry name" value="Ribosomal_bL33"/>
    <property type="match status" value="1"/>
</dbReference>
<dbReference type="InterPro" id="IPR001705">
    <property type="entry name" value="Ribosomal_bL33"/>
</dbReference>
<dbReference type="InterPro" id="IPR018264">
    <property type="entry name" value="Ribosomal_bL33_CS"/>
</dbReference>
<dbReference type="InterPro" id="IPR038584">
    <property type="entry name" value="Ribosomal_bL33_sf"/>
</dbReference>
<dbReference type="InterPro" id="IPR011332">
    <property type="entry name" value="Ribosomal_zn-bd"/>
</dbReference>
<dbReference type="NCBIfam" id="NF001860">
    <property type="entry name" value="PRK00595.1"/>
    <property type="match status" value="1"/>
</dbReference>
<dbReference type="NCBIfam" id="TIGR01023">
    <property type="entry name" value="rpmG_bact"/>
    <property type="match status" value="1"/>
</dbReference>
<dbReference type="PANTHER" id="PTHR15238">
    <property type="entry name" value="54S RIBOSOMAL PROTEIN L39, MITOCHONDRIAL"/>
    <property type="match status" value="1"/>
</dbReference>
<dbReference type="PANTHER" id="PTHR15238:SF1">
    <property type="entry name" value="LARGE RIBOSOMAL SUBUNIT PROTEIN BL33M"/>
    <property type="match status" value="1"/>
</dbReference>
<dbReference type="Pfam" id="PF00471">
    <property type="entry name" value="Ribosomal_L33"/>
    <property type="match status" value="1"/>
</dbReference>
<dbReference type="SUPFAM" id="SSF57829">
    <property type="entry name" value="Zn-binding ribosomal proteins"/>
    <property type="match status" value="1"/>
</dbReference>
<dbReference type="PROSITE" id="PS00582">
    <property type="entry name" value="RIBOSOMAL_L33"/>
    <property type="match status" value="1"/>
</dbReference>
<organism>
    <name type="scientific">Salmonella newport (strain SL254)</name>
    <dbReference type="NCBI Taxonomy" id="423368"/>
    <lineage>
        <taxon>Bacteria</taxon>
        <taxon>Pseudomonadati</taxon>
        <taxon>Pseudomonadota</taxon>
        <taxon>Gammaproteobacteria</taxon>
        <taxon>Enterobacterales</taxon>
        <taxon>Enterobacteriaceae</taxon>
        <taxon>Salmonella</taxon>
    </lineage>
</organism>
<reference key="1">
    <citation type="journal article" date="2011" name="J. Bacteriol.">
        <title>Comparative genomics of 28 Salmonella enterica isolates: evidence for CRISPR-mediated adaptive sublineage evolution.</title>
        <authorList>
            <person name="Fricke W.F."/>
            <person name="Mammel M.K."/>
            <person name="McDermott P.F."/>
            <person name="Tartera C."/>
            <person name="White D.G."/>
            <person name="Leclerc J.E."/>
            <person name="Ravel J."/>
            <person name="Cebula T.A."/>
        </authorList>
    </citation>
    <scope>NUCLEOTIDE SEQUENCE [LARGE SCALE GENOMIC DNA]</scope>
    <source>
        <strain>SL254</strain>
    </source>
</reference>
<evidence type="ECO:0000255" key="1">
    <source>
        <dbReference type="HAMAP-Rule" id="MF_00294"/>
    </source>
</evidence>
<evidence type="ECO:0000305" key="2"/>
<comment type="similarity">
    <text evidence="1">Belongs to the bacterial ribosomal protein bL33 family.</text>
</comment>
<name>RL33_SALNS</name>
<proteinExistence type="inferred from homology"/>
<protein>
    <recommendedName>
        <fullName evidence="1">Large ribosomal subunit protein bL33</fullName>
    </recommendedName>
    <alternativeName>
        <fullName evidence="2">50S ribosomal protein L33</fullName>
    </alternativeName>
</protein>
<keyword id="KW-0687">Ribonucleoprotein</keyword>
<keyword id="KW-0689">Ribosomal protein</keyword>
<feature type="chain" id="PRO_1000115158" description="Large ribosomal subunit protein bL33">
    <location>
        <begin position="1"/>
        <end position="55"/>
    </location>
</feature>
<gene>
    <name evidence="1" type="primary">rpmG</name>
    <name type="ordered locus">SNSL254_A4007</name>
</gene>
<accession>B4SXD8</accession>